<organism>
    <name type="scientific">Herminiimonas arsenicoxydans</name>
    <dbReference type="NCBI Taxonomy" id="204773"/>
    <lineage>
        <taxon>Bacteria</taxon>
        <taxon>Pseudomonadati</taxon>
        <taxon>Pseudomonadota</taxon>
        <taxon>Betaproteobacteria</taxon>
        <taxon>Burkholderiales</taxon>
        <taxon>Oxalobacteraceae</taxon>
        <taxon>Herminiimonas</taxon>
    </lineage>
</organism>
<comment type="function">
    <text evidence="1">Transfers and isomerizes the ribose moiety from AdoMet to the 7-aminomethyl group of 7-deazaguanine (preQ1-tRNA) to give epoxyqueuosine (oQ-tRNA).</text>
</comment>
<comment type="catalytic activity">
    <reaction evidence="1">
        <text>7-aminomethyl-7-carbaguanosine(34) in tRNA + S-adenosyl-L-methionine = epoxyqueuosine(34) in tRNA + adenine + L-methionine + 2 H(+)</text>
        <dbReference type="Rhea" id="RHEA:32155"/>
        <dbReference type="Rhea" id="RHEA-COMP:10342"/>
        <dbReference type="Rhea" id="RHEA-COMP:18582"/>
        <dbReference type="ChEBI" id="CHEBI:15378"/>
        <dbReference type="ChEBI" id="CHEBI:16708"/>
        <dbReference type="ChEBI" id="CHEBI:57844"/>
        <dbReference type="ChEBI" id="CHEBI:59789"/>
        <dbReference type="ChEBI" id="CHEBI:82833"/>
        <dbReference type="ChEBI" id="CHEBI:194443"/>
        <dbReference type="EC" id="2.4.99.17"/>
    </reaction>
</comment>
<comment type="pathway">
    <text evidence="1">tRNA modification; tRNA-queuosine biosynthesis.</text>
</comment>
<comment type="subunit">
    <text evidence="1">Monomer.</text>
</comment>
<comment type="subcellular location">
    <subcellularLocation>
        <location evidence="1">Cytoplasm</location>
    </subcellularLocation>
</comment>
<comment type="similarity">
    <text evidence="1">Belongs to the QueA family.</text>
</comment>
<gene>
    <name evidence="1" type="primary">queA</name>
    <name type="ordered locus">HEAR0303</name>
</gene>
<evidence type="ECO:0000255" key="1">
    <source>
        <dbReference type="HAMAP-Rule" id="MF_00113"/>
    </source>
</evidence>
<proteinExistence type="inferred from homology"/>
<feature type="chain" id="PRO_1000015224" description="S-adenosylmethionine:tRNA ribosyltransferase-isomerase">
    <location>
        <begin position="1"/>
        <end position="341"/>
    </location>
</feature>
<accession>A4G1Z2</accession>
<sequence>MYSLSDFDFELPQELIAQTPLAERSASRLLHVAQDGMIDRAFADIVDLLNPGDLLVFNDTRVLKARFFGVKETGGKVEVLVERVIDSAHVHAQIRASKSPVPGMKIRLADAFDVIVGERAGEFYELQFPGDIFALIEAHGRLPLPPYIEHAADAYDETRYQTVYAKTPGAVAAPTAGLHFDQALLDTLKAKGVQFAYVTLHVGAGTFQPVRNENLAEHNMHSEWYTISQETVGAVHAAQAAGHNIVAVGTTSMRALESASQSGSLQAGSADTRLFITPGYTFKTVTRLITNFHLPKSTLLMLVSAFAGYDAIRAAYQHAISQRYRFFSYGDAMFLTRMPPC</sequence>
<reference key="1">
    <citation type="journal article" date="2007" name="PLoS Genet.">
        <title>A tale of two oxidation states: bacterial colonization of arsenic-rich environments.</title>
        <authorList>
            <person name="Muller D."/>
            <person name="Medigue C."/>
            <person name="Koechler S."/>
            <person name="Barbe V."/>
            <person name="Barakat M."/>
            <person name="Talla E."/>
            <person name="Bonnefoy V."/>
            <person name="Krin E."/>
            <person name="Arsene-Ploetze F."/>
            <person name="Carapito C."/>
            <person name="Chandler M."/>
            <person name="Cournoyer B."/>
            <person name="Cruveiller S."/>
            <person name="Dossat C."/>
            <person name="Duval S."/>
            <person name="Heymann M."/>
            <person name="Leize E."/>
            <person name="Lieutaud A."/>
            <person name="Lievremont D."/>
            <person name="Makita Y."/>
            <person name="Mangenot S."/>
            <person name="Nitschke W."/>
            <person name="Ortet P."/>
            <person name="Perdrial N."/>
            <person name="Schoepp B."/>
            <person name="Siguier P."/>
            <person name="Simeonova D.D."/>
            <person name="Rouy Z."/>
            <person name="Segurens B."/>
            <person name="Turlin E."/>
            <person name="Vallenet D."/>
            <person name="van Dorsselaer A."/>
            <person name="Weiss S."/>
            <person name="Weissenbach J."/>
            <person name="Lett M.-C."/>
            <person name="Danchin A."/>
            <person name="Bertin P.N."/>
        </authorList>
    </citation>
    <scope>NUCLEOTIDE SEQUENCE [LARGE SCALE GENOMIC DNA]</scope>
    <source>
        <strain>ULPAs1</strain>
    </source>
</reference>
<keyword id="KW-0963">Cytoplasm</keyword>
<keyword id="KW-0671">Queuosine biosynthesis</keyword>
<keyword id="KW-1185">Reference proteome</keyword>
<keyword id="KW-0949">S-adenosyl-L-methionine</keyword>
<keyword id="KW-0808">Transferase</keyword>
<name>QUEA_HERAR</name>
<dbReference type="EC" id="2.4.99.17" evidence="1"/>
<dbReference type="EMBL" id="CU207211">
    <property type="protein sequence ID" value="CAL60529.1"/>
    <property type="molecule type" value="Genomic_DNA"/>
</dbReference>
<dbReference type="SMR" id="A4G1Z2"/>
<dbReference type="STRING" id="204773.HEAR0303"/>
<dbReference type="KEGG" id="har:HEAR0303"/>
<dbReference type="eggNOG" id="COG0809">
    <property type="taxonomic scope" value="Bacteria"/>
</dbReference>
<dbReference type="HOGENOM" id="CLU_039110_1_0_4"/>
<dbReference type="OrthoDB" id="9805933at2"/>
<dbReference type="UniPathway" id="UPA00392"/>
<dbReference type="Proteomes" id="UP000006697">
    <property type="component" value="Chromosome"/>
</dbReference>
<dbReference type="GO" id="GO:0005737">
    <property type="term" value="C:cytoplasm"/>
    <property type="evidence" value="ECO:0007669"/>
    <property type="project" value="UniProtKB-SubCell"/>
</dbReference>
<dbReference type="GO" id="GO:0051075">
    <property type="term" value="F:S-adenosylmethionine:tRNA ribosyltransferase-isomerase activity"/>
    <property type="evidence" value="ECO:0007669"/>
    <property type="project" value="UniProtKB-EC"/>
</dbReference>
<dbReference type="GO" id="GO:0008616">
    <property type="term" value="P:queuosine biosynthetic process"/>
    <property type="evidence" value="ECO:0007669"/>
    <property type="project" value="UniProtKB-UniRule"/>
</dbReference>
<dbReference type="GO" id="GO:0002099">
    <property type="term" value="P:tRNA wobble guanine modification"/>
    <property type="evidence" value="ECO:0007669"/>
    <property type="project" value="TreeGrafter"/>
</dbReference>
<dbReference type="FunFam" id="3.40.1780.10:FF:000001">
    <property type="entry name" value="S-adenosylmethionine:tRNA ribosyltransferase-isomerase"/>
    <property type="match status" value="1"/>
</dbReference>
<dbReference type="Gene3D" id="2.40.10.240">
    <property type="entry name" value="QueA-like"/>
    <property type="match status" value="1"/>
</dbReference>
<dbReference type="Gene3D" id="3.40.1780.10">
    <property type="entry name" value="QueA-like"/>
    <property type="match status" value="1"/>
</dbReference>
<dbReference type="HAMAP" id="MF_00113">
    <property type="entry name" value="QueA"/>
    <property type="match status" value="1"/>
</dbReference>
<dbReference type="InterPro" id="IPR003699">
    <property type="entry name" value="QueA"/>
</dbReference>
<dbReference type="InterPro" id="IPR042118">
    <property type="entry name" value="QueA_dom1"/>
</dbReference>
<dbReference type="InterPro" id="IPR042119">
    <property type="entry name" value="QueA_dom2"/>
</dbReference>
<dbReference type="InterPro" id="IPR036100">
    <property type="entry name" value="QueA_sf"/>
</dbReference>
<dbReference type="NCBIfam" id="NF001140">
    <property type="entry name" value="PRK00147.1"/>
    <property type="match status" value="1"/>
</dbReference>
<dbReference type="NCBIfam" id="TIGR00113">
    <property type="entry name" value="queA"/>
    <property type="match status" value="1"/>
</dbReference>
<dbReference type="PANTHER" id="PTHR30307">
    <property type="entry name" value="S-ADENOSYLMETHIONINE:TRNA RIBOSYLTRANSFERASE-ISOMERASE"/>
    <property type="match status" value="1"/>
</dbReference>
<dbReference type="PANTHER" id="PTHR30307:SF0">
    <property type="entry name" value="S-ADENOSYLMETHIONINE:TRNA RIBOSYLTRANSFERASE-ISOMERASE"/>
    <property type="match status" value="1"/>
</dbReference>
<dbReference type="Pfam" id="PF02547">
    <property type="entry name" value="Queuosine_synth"/>
    <property type="match status" value="1"/>
</dbReference>
<dbReference type="SUPFAM" id="SSF111337">
    <property type="entry name" value="QueA-like"/>
    <property type="match status" value="1"/>
</dbReference>
<protein>
    <recommendedName>
        <fullName evidence="1">S-adenosylmethionine:tRNA ribosyltransferase-isomerase</fullName>
        <ecNumber evidence="1">2.4.99.17</ecNumber>
    </recommendedName>
    <alternativeName>
        <fullName evidence="1">Queuosine biosynthesis protein QueA</fullName>
    </alternativeName>
</protein>